<proteinExistence type="inferred from homology"/>
<evidence type="ECO:0000255" key="1">
    <source>
        <dbReference type="HAMAP-Rule" id="MF_00146"/>
    </source>
</evidence>
<protein>
    <recommendedName>
        <fullName evidence="1">dCTP deaminase</fullName>
        <ecNumber evidence="1">3.5.4.13</ecNumber>
    </recommendedName>
    <alternativeName>
        <fullName evidence="1">Deoxycytidine triphosphate deaminase</fullName>
    </alternativeName>
</protein>
<dbReference type="EC" id="3.5.4.13" evidence="1"/>
<dbReference type="EMBL" id="BA000001">
    <property type="protein sequence ID" value="BAA31124.1"/>
    <property type="molecule type" value="Genomic_DNA"/>
</dbReference>
<dbReference type="PIR" id="E71216">
    <property type="entry name" value="E71216"/>
</dbReference>
<dbReference type="RefSeq" id="WP_010886058.1">
    <property type="nucleotide sequence ID" value="NC_000961.1"/>
</dbReference>
<dbReference type="SMR" id="O57706"/>
<dbReference type="STRING" id="70601.gene:9379011"/>
<dbReference type="EnsemblBacteria" id="BAA31124">
    <property type="protein sequence ID" value="BAA31124"/>
    <property type="gene ID" value="BAA31124"/>
</dbReference>
<dbReference type="GeneID" id="1442840"/>
<dbReference type="KEGG" id="pho:PH1997"/>
<dbReference type="eggNOG" id="arCOG04048">
    <property type="taxonomic scope" value="Archaea"/>
</dbReference>
<dbReference type="OrthoDB" id="33242at2157"/>
<dbReference type="UniPathway" id="UPA00610">
    <property type="reaction ID" value="UER00665"/>
</dbReference>
<dbReference type="Proteomes" id="UP000000752">
    <property type="component" value="Chromosome"/>
</dbReference>
<dbReference type="GO" id="GO:0008829">
    <property type="term" value="F:dCTP deaminase activity"/>
    <property type="evidence" value="ECO:0007669"/>
    <property type="project" value="UniProtKB-UniRule"/>
</dbReference>
<dbReference type="GO" id="GO:0000166">
    <property type="term" value="F:nucleotide binding"/>
    <property type="evidence" value="ECO:0007669"/>
    <property type="project" value="UniProtKB-KW"/>
</dbReference>
<dbReference type="GO" id="GO:0006226">
    <property type="term" value="P:dUMP biosynthetic process"/>
    <property type="evidence" value="ECO:0007669"/>
    <property type="project" value="UniProtKB-UniPathway"/>
</dbReference>
<dbReference type="GO" id="GO:0006229">
    <property type="term" value="P:dUTP biosynthetic process"/>
    <property type="evidence" value="ECO:0007669"/>
    <property type="project" value="UniProtKB-UniRule"/>
</dbReference>
<dbReference type="CDD" id="cd07557">
    <property type="entry name" value="trimeric_dUTPase"/>
    <property type="match status" value="1"/>
</dbReference>
<dbReference type="Gene3D" id="2.70.40.10">
    <property type="match status" value="1"/>
</dbReference>
<dbReference type="HAMAP" id="MF_00146">
    <property type="entry name" value="dCTP_deaminase"/>
    <property type="match status" value="1"/>
</dbReference>
<dbReference type="InterPro" id="IPR011962">
    <property type="entry name" value="dCTP_deaminase"/>
</dbReference>
<dbReference type="InterPro" id="IPR036157">
    <property type="entry name" value="dUTPase-like_sf"/>
</dbReference>
<dbReference type="InterPro" id="IPR033704">
    <property type="entry name" value="dUTPase_trimeric"/>
</dbReference>
<dbReference type="NCBIfam" id="TIGR02274">
    <property type="entry name" value="dCTP_deam"/>
    <property type="match status" value="1"/>
</dbReference>
<dbReference type="PANTHER" id="PTHR42680">
    <property type="entry name" value="DCTP DEAMINASE"/>
    <property type="match status" value="1"/>
</dbReference>
<dbReference type="PANTHER" id="PTHR42680:SF3">
    <property type="entry name" value="DCTP DEAMINASE"/>
    <property type="match status" value="1"/>
</dbReference>
<dbReference type="Pfam" id="PF22769">
    <property type="entry name" value="DCD"/>
    <property type="match status" value="1"/>
</dbReference>
<dbReference type="SUPFAM" id="SSF51283">
    <property type="entry name" value="dUTPase-like"/>
    <property type="match status" value="1"/>
</dbReference>
<name>DCD_PYRHO</name>
<comment type="function">
    <text evidence="1">Catalyzes the deamination of dCTP to dUTP.</text>
</comment>
<comment type="catalytic activity">
    <reaction evidence="1">
        <text>dCTP + H2O + H(+) = dUTP + NH4(+)</text>
        <dbReference type="Rhea" id="RHEA:22680"/>
        <dbReference type="ChEBI" id="CHEBI:15377"/>
        <dbReference type="ChEBI" id="CHEBI:15378"/>
        <dbReference type="ChEBI" id="CHEBI:28938"/>
        <dbReference type="ChEBI" id="CHEBI:61481"/>
        <dbReference type="ChEBI" id="CHEBI:61555"/>
        <dbReference type="EC" id="3.5.4.13"/>
    </reaction>
</comment>
<comment type="pathway">
    <text evidence="1">Pyrimidine metabolism; dUMP biosynthesis; dUMP from dCTP (dUTP route): step 1/2.</text>
</comment>
<comment type="subunit">
    <text evidence="1">Homotrimer.</text>
</comment>
<comment type="similarity">
    <text evidence="1">Belongs to the dCTP deaminase family.</text>
</comment>
<accession>O57706</accession>
<feature type="chain" id="PRO_0000156037" description="dCTP deaminase">
    <location>
        <begin position="1"/>
        <end position="156"/>
    </location>
</feature>
<feature type="binding site" evidence="1">
    <location>
        <begin position="79"/>
        <end position="84"/>
    </location>
    <ligand>
        <name>dCTP</name>
        <dbReference type="ChEBI" id="CHEBI:61481"/>
    </ligand>
</feature>
<feature type="binding site" evidence="1">
    <location>
        <position position="95"/>
    </location>
    <ligand>
        <name>dCTP</name>
        <dbReference type="ChEBI" id="CHEBI:61481"/>
    </ligand>
</feature>
<feature type="binding site" evidence="1">
    <location>
        <position position="124"/>
    </location>
    <ligand>
        <name>dCTP</name>
        <dbReference type="ChEBI" id="CHEBI:61481"/>
    </ligand>
</feature>
<feature type="binding site" evidence="1">
    <location>
        <position position="138"/>
    </location>
    <ligand>
        <name>dCTP</name>
        <dbReference type="ChEBI" id="CHEBI:61481"/>
    </ligand>
</feature>
<organism>
    <name type="scientific">Pyrococcus horikoshii (strain ATCC 700860 / DSM 12428 / JCM 9974 / NBRC 100139 / OT-3)</name>
    <dbReference type="NCBI Taxonomy" id="70601"/>
    <lineage>
        <taxon>Archaea</taxon>
        <taxon>Methanobacteriati</taxon>
        <taxon>Methanobacteriota</taxon>
        <taxon>Thermococci</taxon>
        <taxon>Thermococcales</taxon>
        <taxon>Thermococcaceae</taxon>
        <taxon>Pyrococcus</taxon>
    </lineage>
</organism>
<keyword id="KW-0378">Hydrolase</keyword>
<keyword id="KW-0546">Nucleotide metabolism</keyword>
<keyword id="KW-0547">Nucleotide-binding</keyword>
<reference key="1">
    <citation type="journal article" date="1998" name="DNA Res.">
        <title>Complete sequence and gene organization of the genome of a hyper-thermophilic archaebacterium, Pyrococcus horikoshii OT3.</title>
        <authorList>
            <person name="Kawarabayasi Y."/>
            <person name="Sawada M."/>
            <person name="Horikawa H."/>
            <person name="Haikawa Y."/>
            <person name="Hino Y."/>
            <person name="Yamamoto S."/>
            <person name="Sekine M."/>
            <person name="Baba S."/>
            <person name="Kosugi H."/>
            <person name="Hosoyama A."/>
            <person name="Nagai Y."/>
            <person name="Sakai M."/>
            <person name="Ogura K."/>
            <person name="Otsuka R."/>
            <person name="Nakazawa H."/>
            <person name="Takamiya M."/>
            <person name="Ohfuku Y."/>
            <person name="Funahashi T."/>
            <person name="Tanaka T."/>
            <person name="Kudoh Y."/>
            <person name="Yamazaki J."/>
            <person name="Kushida N."/>
            <person name="Oguchi A."/>
            <person name="Aoki K."/>
            <person name="Yoshizawa T."/>
            <person name="Nakamura Y."/>
            <person name="Robb F.T."/>
            <person name="Horikoshi K."/>
            <person name="Masuchi Y."/>
            <person name="Shizuya H."/>
            <person name="Kikuchi H."/>
        </authorList>
    </citation>
    <scope>NUCLEOTIDE SEQUENCE [LARGE SCALE GENOMIC DNA]</scope>
    <source>
        <strain>ATCC 700860 / DSM 12428 / JCM 9974 / NBRC 100139 / OT-3</strain>
    </source>
</reference>
<sequence>MLLPDWKIRKEILIEPFSEESLQPAGYDLRVGREAFVSGKLIDVEKEGKVVIPPREYALILTLERVKLPDDVMGDMKIRSSLAREGILGSFAWVDPGWDGNLTLMLYNASNEPVELKYGERFVQIVFIRLEDPPRNPYSGNYQGSTRLVFSKRKKL</sequence>
<gene>
    <name evidence="1" type="primary">dcd</name>
    <name type="ordered locus">PH1997</name>
</gene>